<keyword id="KW-0028">Amino-acid biosynthesis</keyword>
<keyword id="KW-0067">ATP-binding</keyword>
<keyword id="KW-0963">Cytoplasm</keyword>
<keyword id="KW-0328">Glycosyltransferase</keyword>
<keyword id="KW-0368">Histidine biosynthesis</keyword>
<keyword id="KW-0460">Magnesium</keyword>
<keyword id="KW-0479">Metal-binding</keyword>
<keyword id="KW-0547">Nucleotide-binding</keyword>
<keyword id="KW-1185">Reference proteome</keyword>
<keyword id="KW-0808">Transferase</keyword>
<dbReference type="EC" id="2.4.2.17" evidence="1"/>
<dbReference type="EMBL" id="CP000302">
    <property type="protein sequence ID" value="ABE54902.1"/>
    <property type="molecule type" value="Genomic_DNA"/>
</dbReference>
<dbReference type="RefSeq" id="WP_011496060.1">
    <property type="nucleotide sequence ID" value="NC_007954.1"/>
</dbReference>
<dbReference type="SMR" id="Q12NS4"/>
<dbReference type="STRING" id="318161.Sden_1618"/>
<dbReference type="KEGG" id="sdn:Sden_1618"/>
<dbReference type="eggNOG" id="COG0040">
    <property type="taxonomic scope" value="Bacteria"/>
</dbReference>
<dbReference type="HOGENOM" id="CLU_038115_1_0_6"/>
<dbReference type="OrthoDB" id="9801867at2"/>
<dbReference type="UniPathway" id="UPA00031">
    <property type="reaction ID" value="UER00006"/>
</dbReference>
<dbReference type="Proteomes" id="UP000001982">
    <property type="component" value="Chromosome"/>
</dbReference>
<dbReference type="GO" id="GO:0005737">
    <property type="term" value="C:cytoplasm"/>
    <property type="evidence" value="ECO:0007669"/>
    <property type="project" value="UniProtKB-SubCell"/>
</dbReference>
<dbReference type="GO" id="GO:0005524">
    <property type="term" value="F:ATP binding"/>
    <property type="evidence" value="ECO:0007669"/>
    <property type="project" value="UniProtKB-KW"/>
</dbReference>
<dbReference type="GO" id="GO:0003879">
    <property type="term" value="F:ATP phosphoribosyltransferase activity"/>
    <property type="evidence" value="ECO:0007669"/>
    <property type="project" value="UniProtKB-UniRule"/>
</dbReference>
<dbReference type="GO" id="GO:0000287">
    <property type="term" value="F:magnesium ion binding"/>
    <property type="evidence" value="ECO:0007669"/>
    <property type="project" value="UniProtKB-UniRule"/>
</dbReference>
<dbReference type="GO" id="GO:0000105">
    <property type="term" value="P:L-histidine biosynthetic process"/>
    <property type="evidence" value="ECO:0007669"/>
    <property type="project" value="UniProtKB-UniRule"/>
</dbReference>
<dbReference type="FunFam" id="3.30.70.120:FF:000002">
    <property type="entry name" value="ATP phosphoribosyltransferase"/>
    <property type="match status" value="1"/>
</dbReference>
<dbReference type="FunFam" id="3.40.190.10:FF:000008">
    <property type="entry name" value="ATP phosphoribosyltransferase"/>
    <property type="match status" value="1"/>
</dbReference>
<dbReference type="Gene3D" id="3.30.70.120">
    <property type="match status" value="1"/>
</dbReference>
<dbReference type="Gene3D" id="3.40.190.10">
    <property type="entry name" value="Periplasmic binding protein-like II"/>
    <property type="match status" value="2"/>
</dbReference>
<dbReference type="HAMAP" id="MF_00079">
    <property type="entry name" value="HisG_Long"/>
    <property type="match status" value="1"/>
</dbReference>
<dbReference type="InterPro" id="IPR020621">
    <property type="entry name" value="ATP-PRT_HisG_long"/>
</dbReference>
<dbReference type="InterPro" id="IPR013820">
    <property type="entry name" value="ATP_PRibTrfase_cat"/>
</dbReference>
<dbReference type="InterPro" id="IPR018198">
    <property type="entry name" value="ATP_PRibTrfase_CS"/>
</dbReference>
<dbReference type="InterPro" id="IPR001348">
    <property type="entry name" value="ATP_PRibTrfase_HisG"/>
</dbReference>
<dbReference type="InterPro" id="IPR013115">
    <property type="entry name" value="HisG_C"/>
</dbReference>
<dbReference type="InterPro" id="IPR011322">
    <property type="entry name" value="N-reg_PII-like_a/b"/>
</dbReference>
<dbReference type="InterPro" id="IPR015867">
    <property type="entry name" value="N-reg_PII/ATP_PRibTrfase_C"/>
</dbReference>
<dbReference type="NCBIfam" id="TIGR00070">
    <property type="entry name" value="hisG"/>
    <property type="match status" value="1"/>
</dbReference>
<dbReference type="NCBIfam" id="TIGR03455">
    <property type="entry name" value="HisG_C-term"/>
    <property type="match status" value="1"/>
</dbReference>
<dbReference type="PANTHER" id="PTHR21403:SF8">
    <property type="entry name" value="ATP PHOSPHORIBOSYLTRANSFERASE"/>
    <property type="match status" value="1"/>
</dbReference>
<dbReference type="PANTHER" id="PTHR21403">
    <property type="entry name" value="ATP PHOSPHORIBOSYLTRANSFERASE ATP-PRTASE"/>
    <property type="match status" value="1"/>
</dbReference>
<dbReference type="Pfam" id="PF01634">
    <property type="entry name" value="HisG"/>
    <property type="match status" value="1"/>
</dbReference>
<dbReference type="Pfam" id="PF08029">
    <property type="entry name" value="HisG_C"/>
    <property type="match status" value="1"/>
</dbReference>
<dbReference type="SUPFAM" id="SSF54913">
    <property type="entry name" value="GlnB-like"/>
    <property type="match status" value="1"/>
</dbReference>
<dbReference type="SUPFAM" id="SSF53850">
    <property type="entry name" value="Periplasmic binding protein-like II"/>
    <property type="match status" value="1"/>
</dbReference>
<dbReference type="PROSITE" id="PS01316">
    <property type="entry name" value="ATP_P_PHORIBOSYLTR"/>
    <property type="match status" value="1"/>
</dbReference>
<organism>
    <name type="scientific">Shewanella denitrificans (strain OS217 / ATCC BAA-1090 / DSM 15013)</name>
    <dbReference type="NCBI Taxonomy" id="318161"/>
    <lineage>
        <taxon>Bacteria</taxon>
        <taxon>Pseudomonadati</taxon>
        <taxon>Pseudomonadota</taxon>
        <taxon>Gammaproteobacteria</taxon>
        <taxon>Alteromonadales</taxon>
        <taxon>Shewanellaceae</taxon>
        <taxon>Shewanella</taxon>
    </lineage>
</organism>
<gene>
    <name evidence="1" type="primary">hisG</name>
    <name type="ordered locus">Sden_1618</name>
</gene>
<proteinExistence type="inferred from homology"/>
<sequence length="299" mass="32991">MPNTQRLRIAIQKSGRLSKESQQLLKSCGVKFTVNEQRLIAHADNMPIDLLRVRDDDIPGLVMDGVVDLGIIGENVLEEEQIERQTLNKPSTFIKLRELDFGSCRLSLAVPNEFDYQDVSSLSGLRIATSYPNLLRRFMAEKGISYSDCMLKGSVEVAPRAGLSDAICDLVSTGATLEANGLYETEVIYRSTACIIQSNEAQTAEKQVLINKILSRANGVIRARESKYILLHAPTETLEQIIALLPGAENPTVLPLNDDTNRVAIHAVSTEDLFWDTMEQLTALGASSILVMPIEKMMG</sequence>
<reference key="1">
    <citation type="submission" date="2006-03" db="EMBL/GenBank/DDBJ databases">
        <title>Complete sequence of Shewanella denitrificans OS217.</title>
        <authorList>
            <consortium name="US DOE Joint Genome Institute"/>
            <person name="Copeland A."/>
            <person name="Lucas S."/>
            <person name="Lapidus A."/>
            <person name="Barry K."/>
            <person name="Detter J.C."/>
            <person name="Glavina del Rio T."/>
            <person name="Hammon N."/>
            <person name="Israni S."/>
            <person name="Dalin E."/>
            <person name="Tice H."/>
            <person name="Pitluck S."/>
            <person name="Brettin T."/>
            <person name="Bruce D."/>
            <person name="Han C."/>
            <person name="Tapia R."/>
            <person name="Gilna P."/>
            <person name="Kiss H."/>
            <person name="Schmutz J."/>
            <person name="Larimer F."/>
            <person name="Land M."/>
            <person name="Hauser L."/>
            <person name="Kyrpides N."/>
            <person name="Lykidis A."/>
            <person name="Richardson P."/>
        </authorList>
    </citation>
    <scope>NUCLEOTIDE SEQUENCE [LARGE SCALE GENOMIC DNA]</scope>
    <source>
        <strain>OS217 / ATCC BAA-1090 / DSM 15013</strain>
    </source>
</reference>
<feature type="chain" id="PRO_1000004501" description="ATP phosphoribosyltransferase">
    <location>
        <begin position="1"/>
        <end position="299"/>
    </location>
</feature>
<name>HIS1_SHEDO</name>
<protein>
    <recommendedName>
        <fullName evidence="1">ATP phosphoribosyltransferase</fullName>
        <shortName evidence="1">ATP-PRT</shortName>
        <shortName evidence="1">ATP-PRTase</shortName>
        <ecNumber evidence="1">2.4.2.17</ecNumber>
    </recommendedName>
</protein>
<evidence type="ECO:0000255" key="1">
    <source>
        <dbReference type="HAMAP-Rule" id="MF_00079"/>
    </source>
</evidence>
<comment type="function">
    <text evidence="1">Catalyzes the condensation of ATP and 5-phosphoribose 1-diphosphate to form N'-(5'-phosphoribosyl)-ATP (PR-ATP). Has a crucial role in the pathway because the rate of histidine biosynthesis seems to be controlled primarily by regulation of HisG enzymatic activity.</text>
</comment>
<comment type="catalytic activity">
    <reaction evidence="1">
        <text>1-(5-phospho-beta-D-ribosyl)-ATP + diphosphate = 5-phospho-alpha-D-ribose 1-diphosphate + ATP</text>
        <dbReference type="Rhea" id="RHEA:18473"/>
        <dbReference type="ChEBI" id="CHEBI:30616"/>
        <dbReference type="ChEBI" id="CHEBI:33019"/>
        <dbReference type="ChEBI" id="CHEBI:58017"/>
        <dbReference type="ChEBI" id="CHEBI:73183"/>
        <dbReference type="EC" id="2.4.2.17"/>
    </reaction>
</comment>
<comment type="cofactor">
    <cofactor evidence="1">
        <name>Mg(2+)</name>
        <dbReference type="ChEBI" id="CHEBI:18420"/>
    </cofactor>
</comment>
<comment type="activity regulation">
    <text evidence="1">Feedback inhibited by histidine.</text>
</comment>
<comment type="pathway">
    <text evidence="1">Amino-acid biosynthesis; L-histidine biosynthesis; L-histidine from 5-phospho-alpha-D-ribose 1-diphosphate: step 1/9.</text>
</comment>
<comment type="subcellular location">
    <subcellularLocation>
        <location evidence="1">Cytoplasm</location>
    </subcellularLocation>
</comment>
<comment type="similarity">
    <text evidence="1">Belongs to the ATP phosphoribosyltransferase family. Long subfamily.</text>
</comment>
<accession>Q12NS4</accession>